<sequence>MSVLVPMVVEQTSRGERAYDIYSRLLKDRIIFLGSAIDDHVANLVIAQMLFLEAEDPDKDIHLYINSPGGSISAGMAIFDTMQYIRPDVSTICVGLAASMGAFLLAAGAKGKRFALPNSEIMIHQPMGGTQGQAVDIEIHAKRILAIRDNLNRILSEITGKPLEQIARDTDRDHFMTAREAREYGLIDEVITKRELPAK</sequence>
<accession>Q2RL31</accession>
<proteinExistence type="inferred from homology"/>
<reference key="1">
    <citation type="journal article" date="2008" name="Environ. Microbiol.">
        <title>The complete genome sequence of Moorella thermoacetica (f. Clostridium thermoaceticum).</title>
        <authorList>
            <person name="Pierce E."/>
            <person name="Xie G."/>
            <person name="Barabote R.D."/>
            <person name="Saunders E."/>
            <person name="Han C.S."/>
            <person name="Detter J.C."/>
            <person name="Richardson P."/>
            <person name="Brettin T.S."/>
            <person name="Das A."/>
            <person name="Ljungdahl L.G."/>
            <person name="Ragsdale S.W."/>
        </authorList>
    </citation>
    <scope>NUCLEOTIDE SEQUENCE [LARGE SCALE GENOMIC DNA]</scope>
    <source>
        <strain>ATCC 39073 / JCM 9320</strain>
    </source>
</reference>
<comment type="function">
    <text evidence="1">Cleaves peptides in various proteins in a process that requires ATP hydrolysis. Has a chymotrypsin-like activity. Plays a major role in the degradation of misfolded proteins.</text>
</comment>
<comment type="catalytic activity">
    <reaction evidence="1">
        <text>Hydrolysis of proteins to small peptides in the presence of ATP and magnesium. alpha-casein is the usual test substrate. In the absence of ATP, only oligopeptides shorter than five residues are hydrolyzed (such as succinyl-Leu-Tyr-|-NHMec, and Leu-Tyr-Leu-|-Tyr-Trp, in which cleavage of the -Tyr-|-Leu- and -Tyr-|-Trp bonds also occurs).</text>
        <dbReference type="EC" id="3.4.21.92"/>
    </reaction>
</comment>
<comment type="subunit">
    <text evidence="1">Fourteen ClpP subunits assemble into 2 heptameric rings which stack back to back to give a disk-like structure with a central cavity, resembling the structure of eukaryotic proteasomes.</text>
</comment>
<comment type="subcellular location">
    <subcellularLocation>
        <location evidence="1">Cytoplasm</location>
    </subcellularLocation>
</comment>
<comment type="similarity">
    <text evidence="1">Belongs to the peptidase S14 family.</text>
</comment>
<organism>
    <name type="scientific">Moorella thermoacetica (strain ATCC 39073 / JCM 9320)</name>
    <dbReference type="NCBI Taxonomy" id="264732"/>
    <lineage>
        <taxon>Bacteria</taxon>
        <taxon>Bacillati</taxon>
        <taxon>Bacillota</taxon>
        <taxon>Clostridia</taxon>
        <taxon>Moorellales</taxon>
        <taxon>Moorellaceae</taxon>
        <taxon>Moorella</taxon>
    </lineage>
</organism>
<gene>
    <name evidence="1" type="primary">clpP</name>
    <name type="ordered locus">Moth_0528</name>
</gene>
<name>CLPP_MOOTA</name>
<protein>
    <recommendedName>
        <fullName evidence="1">ATP-dependent Clp protease proteolytic subunit</fullName>
        <ecNumber evidence="1">3.4.21.92</ecNumber>
    </recommendedName>
    <alternativeName>
        <fullName evidence="1">Endopeptidase Clp</fullName>
    </alternativeName>
</protein>
<dbReference type="EC" id="3.4.21.92" evidence="1"/>
<dbReference type="EMBL" id="CP000232">
    <property type="protein sequence ID" value="ABC18858.1"/>
    <property type="molecule type" value="Genomic_DNA"/>
</dbReference>
<dbReference type="RefSeq" id="YP_429401.1">
    <property type="nucleotide sequence ID" value="NC_007644.1"/>
</dbReference>
<dbReference type="SMR" id="Q2RL31"/>
<dbReference type="STRING" id="264732.Moth_0528"/>
<dbReference type="MEROPS" id="S14.001"/>
<dbReference type="EnsemblBacteria" id="ABC18858">
    <property type="protein sequence ID" value="ABC18858"/>
    <property type="gene ID" value="Moth_0528"/>
</dbReference>
<dbReference type="KEGG" id="mta:Moth_0528"/>
<dbReference type="PATRIC" id="fig|264732.11.peg.570"/>
<dbReference type="eggNOG" id="COG0740">
    <property type="taxonomic scope" value="Bacteria"/>
</dbReference>
<dbReference type="HOGENOM" id="CLU_058707_3_2_9"/>
<dbReference type="OrthoDB" id="9802800at2"/>
<dbReference type="GO" id="GO:0005737">
    <property type="term" value="C:cytoplasm"/>
    <property type="evidence" value="ECO:0007669"/>
    <property type="project" value="UniProtKB-SubCell"/>
</dbReference>
<dbReference type="GO" id="GO:0009368">
    <property type="term" value="C:endopeptidase Clp complex"/>
    <property type="evidence" value="ECO:0007669"/>
    <property type="project" value="TreeGrafter"/>
</dbReference>
<dbReference type="GO" id="GO:0004176">
    <property type="term" value="F:ATP-dependent peptidase activity"/>
    <property type="evidence" value="ECO:0007669"/>
    <property type="project" value="InterPro"/>
</dbReference>
<dbReference type="GO" id="GO:0051117">
    <property type="term" value="F:ATPase binding"/>
    <property type="evidence" value="ECO:0007669"/>
    <property type="project" value="TreeGrafter"/>
</dbReference>
<dbReference type="GO" id="GO:0004252">
    <property type="term" value="F:serine-type endopeptidase activity"/>
    <property type="evidence" value="ECO:0007669"/>
    <property type="project" value="UniProtKB-UniRule"/>
</dbReference>
<dbReference type="GO" id="GO:0006515">
    <property type="term" value="P:protein quality control for misfolded or incompletely synthesized proteins"/>
    <property type="evidence" value="ECO:0007669"/>
    <property type="project" value="TreeGrafter"/>
</dbReference>
<dbReference type="CDD" id="cd07017">
    <property type="entry name" value="S14_ClpP_2"/>
    <property type="match status" value="1"/>
</dbReference>
<dbReference type="FunFam" id="3.90.226.10:FF:000001">
    <property type="entry name" value="ATP-dependent Clp protease proteolytic subunit"/>
    <property type="match status" value="1"/>
</dbReference>
<dbReference type="Gene3D" id="3.90.226.10">
    <property type="entry name" value="2-enoyl-CoA Hydratase, Chain A, domain 1"/>
    <property type="match status" value="1"/>
</dbReference>
<dbReference type="HAMAP" id="MF_00444">
    <property type="entry name" value="ClpP"/>
    <property type="match status" value="1"/>
</dbReference>
<dbReference type="InterPro" id="IPR001907">
    <property type="entry name" value="ClpP"/>
</dbReference>
<dbReference type="InterPro" id="IPR029045">
    <property type="entry name" value="ClpP/crotonase-like_dom_sf"/>
</dbReference>
<dbReference type="InterPro" id="IPR023562">
    <property type="entry name" value="ClpP/TepA"/>
</dbReference>
<dbReference type="InterPro" id="IPR033135">
    <property type="entry name" value="ClpP_His_AS"/>
</dbReference>
<dbReference type="InterPro" id="IPR018215">
    <property type="entry name" value="ClpP_Ser_AS"/>
</dbReference>
<dbReference type="NCBIfam" id="TIGR00493">
    <property type="entry name" value="clpP"/>
    <property type="match status" value="1"/>
</dbReference>
<dbReference type="NCBIfam" id="NF001368">
    <property type="entry name" value="PRK00277.1"/>
    <property type="match status" value="1"/>
</dbReference>
<dbReference type="NCBIfam" id="NF009205">
    <property type="entry name" value="PRK12553.1"/>
    <property type="match status" value="1"/>
</dbReference>
<dbReference type="PANTHER" id="PTHR10381">
    <property type="entry name" value="ATP-DEPENDENT CLP PROTEASE PROTEOLYTIC SUBUNIT"/>
    <property type="match status" value="1"/>
</dbReference>
<dbReference type="PANTHER" id="PTHR10381:SF70">
    <property type="entry name" value="ATP-DEPENDENT CLP PROTEASE PROTEOLYTIC SUBUNIT"/>
    <property type="match status" value="1"/>
</dbReference>
<dbReference type="Pfam" id="PF00574">
    <property type="entry name" value="CLP_protease"/>
    <property type="match status" value="1"/>
</dbReference>
<dbReference type="PRINTS" id="PR00127">
    <property type="entry name" value="CLPPROTEASEP"/>
</dbReference>
<dbReference type="SUPFAM" id="SSF52096">
    <property type="entry name" value="ClpP/crotonase"/>
    <property type="match status" value="1"/>
</dbReference>
<dbReference type="PROSITE" id="PS00382">
    <property type="entry name" value="CLP_PROTEASE_HIS"/>
    <property type="match status" value="1"/>
</dbReference>
<dbReference type="PROSITE" id="PS00381">
    <property type="entry name" value="CLP_PROTEASE_SER"/>
    <property type="match status" value="1"/>
</dbReference>
<evidence type="ECO:0000255" key="1">
    <source>
        <dbReference type="HAMAP-Rule" id="MF_00444"/>
    </source>
</evidence>
<keyword id="KW-0963">Cytoplasm</keyword>
<keyword id="KW-0378">Hydrolase</keyword>
<keyword id="KW-0645">Protease</keyword>
<keyword id="KW-0720">Serine protease</keyword>
<feature type="chain" id="PRO_0000236393" description="ATP-dependent Clp protease proteolytic subunit">
    <location>
        <begin position="1"/>
        <end position="199"/>
    </location>
</feature>
<feature type="active site" description="Nucleophile" evidence="1">
    <location>
        <position position="99"/>
    </location>
</feature>
<feature type="active site" evidence="1">
    <location>
        <position position="124"/>
    </location>
</feature>